<proteinExistence type="inferred from homology"/>
<protein>
    <recommendedName>
        <fullName evidence="1">Phospho-N-acetylmuramoyl-pentapeptide-transferase</fullName>
        <ecNumber evidence="1">2.7.8.13</ecNumber>
    </recommendedName>
    <alternativeName>
        <fullName evidence="1">UDP-MurNAc-pentapeptide phosphotransferase</fullName>
    </alternativeName>
</protein>
<organism>
    <name type="scientific">Rhodospirillum rubrum (strain ATCC 11170 / ATH 1.1.1 / DSM 467 / LMG 4362 / NCIMB 8255 / S1)</name>
    <dbReference type="NCBI Taxonomy" id="269796"/>
    <lineage>
        <taxon>Bacteria</taxon>
        <taxon>Pseudomonadati</taxon>
        <taxon>Pseudomonadota</taxon>
        <taxon>Alphaproteobacteria</taxon>
        <taxon>Rhodospirillales</taxon>
        <taxon>Rhodospirillaceae</taxon>
        <taxon>Rhodospirillum</taxon>
    </lineage>
</organism>
<reference key="1">
    <citation type="journal article" date="2011" name="Stand. Genomic Sci.">
        <title>Complete genome sequence of Rhodospirillum rubrum type strain (S1).</title>
        <authorList>
            <person name="Munk A.C."/>
            <person name="Copeland A."/>
            <person name="Lucas S."/>
            <person name="Lapidus A."/>
            <person name="Del Rio T.G."/>
            <person name="Barry K."/>
            <person name="Detter J.C."/>
            <person name="Hammon N."/>
            <person name="Israni S."/>
            <person name="Pitluck S."/>
            <person name="Brettin T."/>
            <person name="Bruce D."/>
            <person name="Han C."/>
            <person name="Tapia R."/>
            <person name="Gilna P."/>
            <person name="Schmutz J."/>
            <person name="Larimer F."/>
            <person name="Land M."/>
            <person name="Kyrpides N.C."/>
            <person name="Mavromatis K."/>
            <person name="Richardson P."/>
            <person name="Rohde M."/>
            <person name="Goeker M."/>
            <person name="Klenk H.P."/>
            <person name="Zhang Y."/>
            <person name="Roberts G.P."/>
            <person name="Reslewic S."/>
            <person name="Schwartz D.C."/>
        </authorList>
    </citation>
    <scope>NUCLEOTIDE SEQUENCE [LARGE SCALE GENOMIC DNA]</scope>
    <source>
        <strain>ATCC 11170 / ATH 1.1.1 / DSM 467 / LMG 4362 / NCIMB 8255 / S1</strain>
    </source>
</reference>
<feature type="chain" id="PRO_0000235476" description="Phospho-N-acetylmuramoyl-pentapeptide-transferase">
    <location>
        <begin position="1"/>
        <end position="360"/>
    </location>
</feature>
<feature type="transmembrane region" description="Helical" evidence="1">
    <location>
        <begin position="27"/>
        <end position="47"/>
    </location>
</feature>
<feature type="transmembrane region" description="Helical" evidence="1">
    <location>
        <begin position="73"/>
        <end position="93"/>
    </location>
</feature>
<feature type="transmembrane region" description="Helical" evidence="1">
    <location>
        <begin position="98"/>
        <end position="118"/>
    </location>
</feature>
<feature type="transmembrane region" description="Helical" evidence="1">
    <location>
        <begin position="134"/>
        <end position="154"/>
    </location>
</feature>
<feature type="transmembrane region" description="Helical" evidence="1">
    <location>
        <begin position="168"/>
        <end position="188"/>
    </location>
</feature>
<feature type="transmembrane region" description="Helical" evidence="1">
    <location>
        <begin position="199"/>
        <end position="219"/>
    </location>
</feature>
<feature type="transmembrane region" description="Helical" evidence="1">
    <location>
        <begin position="239"/>
        <end position="259"/>
    </location>
</feature>
<feature type="transmembrane region" description="Helical" evidence="1">
    <location>
        <begin position="263"/>
        <end position="283"/>
    </location>
</feature>
<feature type="transmembrane region" description="Helical" evidence="1">
    <location>
        <begin position="288"/>
        <end position="308"/>
    </location>
</feature>
<feature type="transmembrane region" description="Helical" evidence="1">
    <location>
        <begin position="337"/>
        <end position="357"/>
    </location>
</feature>
<name>MRAY_RHORT</name>
<accession>Q2RVU1</accession>
<gene>
    <name evidence="1" type="primary">mraY</name>
    <name type="ordered locus">Rru_A0953</name>
</gene>
<dbReference type="EC" id="2.7.8.13" evidence="1"/>
<dbReference type="EMBL" id="CP000230">
    <property type="protein sequence ID" value="ABC21754.1"/>
    <property type="molecule type" value="Genomic_DNA"/>
</dbReference>
<dbReference type="RefSeq" id="WP_011388708.1">
    <property type="nucleotide sequence ID" value="NC_007643.1"/>
</dbReference>
<dbReference type="RefSeq" id="YP_426041.1">
    <property type="nucleotide sequence ID" value="NC_007643.1"/>
</dbReference>
<dbReference type="SMR" id="Q2RVU1"/>
<dbReference type="STRING" id="269796.Rru_A0953"/>
<dbReference type="EnsemblBacteria" id="ABC21754">
    <property type="protein sequence ID" value="ABC21754"/>
    <property type="gene ID" value="Rru_A0953"/>
</dbReference>
<dbReference type="KEGG" id="rru:Rru_A0953"/>
<dbReference type="PATRIC" id="fig|269796.9.peg.1009"/>
<dbReference type="eggNOG" id="COG0472">
    <property type="taxonomic scope" value="Bacteria"/>
</dbReference>
<dbReference type="HOGENOM" id="CLU_023982_0_0_5"/>
<dbReference type="PhylomeDB" id="Q2RVU1"/>
<dbReference type="UniPathway" id="UPA00219"/>
<dbReference type="Proteomes" id="UP000001929">
    <property type="component" value="Chromosome"/>
</dbReference>
<dbReference type="GO" id="GO:0005886">
    <property type="term" value="C:plasma membrane"/>
    <property type="evidence" value="ECO:0007669"/>
    <property type="project" value="UniProtKB-SubCell"/>
</dbReference>
<dbReference type="GO" id="GO:0046872">
    <property type="term" value="F:metal ion binding"/>
    <property type="evidence" value="ECO:0007669"/>
    <property type="project" value="UniProtKB-KW"/>
</dbReference>
<dbReference type="GO" id="GO:0008963">
    <property type="term" value="F:phospho-N-acetylmuramoyl-pentapeptide-transferase activity"/>
    <property type="evidence" value="ECO:0007669"/>
    <property type="project" value="UniProtKB-UniRule"/>
</dbReference>
<dbReference type="GO" id="GO:0051992">
    <property type="term" value="F:UDP-N-acetylmuramoyl-L-alanyl-D-glutamyl-meso-2,6-diaminopimelyl-D-alanyl-D-alanine:undecaprenyl-phosphate transferase activity"/>
    <property type="evidence" value="ECO:0007669"/>
    <property type="project" value="RHEA"/>
</dbReference>
<dbReference type="GO" id="GO:0051301">
    <property type="term" value="P:cell division"/>
    <property type="evidence" value="ECO:0007669"/>
    <property type="project" value="UniProtKB-KW"/>
</dbReference>
<dbReference type="GO" id="GO:0071555">
    <property type="term" value="P:cell wall organization"/>
    <property type="evidence" value="ECO:0007669"/>
    <property type="project" value="UniProtKB-KW"/>
</dbReference>
<dbReference type="GO" id="GO:0009252">
    <property type="term" value="P:peptidoglycan biosynthetic process"/>
    <property type="evidence" value="ECO:0007669"/>
    <property type="project" value="UniProtKB-UniRule"/>
</dbReference>
<dbReference type="GO" id="GO:0008360">
    <property type="term" value="P:regulation of cell shape"/>
    <property type="evidence" value="ECO:0007669"/>
    <property type="project" value="UniProtKB-KW"/>
</dbReference>
<dbReference type="CDD" id="cd06852">
    <property type="entry name" value="GT_MraY"/>
    <property type="match status" value="1"/>
</dbReference>
<dbReference type="HAMAP" id="MF_00038">
    <property type="entry name" value="MraY"/>
    <property type="match status" value="1"/>
</dbReference>
<dbReference type="InterPro" id="IPR000715">
    <property type="entry name" value="Glycosyl_transferase_4"/>
</dbReference>
<dbReference type="InterPro" id="IPR003524">
    <property type="entry name" value="PNAcMuramoyl-5peptid_Trfase"/>
</dbReference>
<dbReference type="InterPro" id="IPR018480">
    <property type="entry name" value="PNAcMuramoyl-5peptid_Trfase_CS"/>
</dbReference>
<dbReference type="NCBIfam" id="TIGR00445">
    <property type="entry name" value="mraY"/>
    <property type="match status" value="1"/>
</dbReference>
<dbReference type="PANTHER" id="PTHR22926">
    <property type="entry name" value="PHOSPHO-N-ACETYLMURAMOYL-PENTAPEPTIDE-TRANSFERASE"/>
    <property type="match status" value="1"/>
</dbReference>
<dbReference type="PANTHER" id="PTHR22926:SF5">
    <property type="entry name" value="PHOSPHO-N-ACETYLMURAMOYL-PENTAPEPTIDE-TRANSFERASE HOMOLOG"/>
    <property type="match status" value="1"/>
</dbReference>
<dbReference type="Pfam" id="PF00953">
    <property type="entry name" value="Glycos_transf_4"/>
    <property type="match status" value="1"/>
</dbReference>
<dbReference type="Pfam" id="PF10555">
    <property type="entry name" value="MraY_sig1"/>
    <property type="match status" value="1"/>
</dbReference>
<dbReference type="PROSITE" id="PS01347">
    <property type="entry name" value="MRAY_1"/>
    <property type="match status" value="1"/>
</dbReference>
<dbReference type="PROSITE" id="PS01348">
    <property type="entry name" value="MRAY_2"/>
    <property type="match status" value="1"/>
</dbReference>
<keyword id="KW-0131">Cell cycle</keyword>
<keyword id="KW-0132">Cell division</keyword>
<keyword id="KW-0997">Cell inner membrane</keyword>
<keyword id="KW-1003">Cell membrane</keyword>
<keyword id="KW-0133">Cell shape</keyword>
<keyword id="KW-0961">Cell wall biogenesis/degradation</keyword>
<keyword id="KW-0460">Magnesium</keyword>
<keyword id="KW-0472">Membrane</keyword>
<keyword id="KW-0479">Metal-binding</keyword>
<keyword id="KW-0573">Peptidoglycan synthesis</keyword>
<keyword id="KW-1185">Reference proteome</keyword>
<keyword id="KW-0808">Transferase</keyword>
<keyword id="KW-0812">Transmembrane</keyword>
<keyword id="KW-1133">Transmembrane helix</keyword>
<sequence length="360" mass="38513">MLYFLSELTAQVSALNVFRYLTFRTGGAVMTAMLVAFVFGPGIIEWLKRKQGEGQPIRSDGPESHLTKKGTPTMGGIMILLGVGVATLLWADLSKGYVWAVLLLTLGYGAIGFADDYLKLTKRNTKGLSGRLKLVAQVGMAVIAGLWIMLLGQGDQASSLALPFFKDLTFNLGWFYLPFAAFVMVGASNAVNLTDGLDGLAIVPVMIAAGVFMLIAYLVGNIIFSNYLQIQHVPGTGELAVFCGAIVGAAVGFLWFNAPPAMVFMGDTGSLALGGALGAVSVVTKHEIVLAIVGGLFVLETVSVIVQVASFKLTGKRVFRMAPLHHHFEKKGWAEPTVVIRFWIIAMILAIVGLSTLKLR</sequence>
<evidence type="ECO:0000255" key="1">
    <source>
        <dbReference type="HAMAP-Rule" id="MF_00038"/>
    </source>
</evidence>
<comment type="function">
    <text evidence="1">Catalyzes the initial step of the lipid cycle reactions in the biosynthesis of the cell wall peptidoglycan: transfers peptidoglycan precursor phospho-MurNAc-pentapeptide from UDP-MurNAc-pentapeptide onto the lipid carrier undecaprenyl phosphate, yielding undecaprenyl-pyrophosphoryl-MurNAc-pentapeptide, known as lipid I.</text>
</comment>
<comment type="catalytic activity">
    <reaction evidence="1">
        <text>UDP-N-acetyl-alpha-D-muramoyl-L-alanyl-gamma-D-glutamyl-meso-2,6-diaminopimeloyl-D-alanyl-D-alanine + di-trans,octa-cis-undecaprenyl phosphate = di-trans,octa-cis-undecaprenyl diphospho-N-acetyl-alpha-D-muramoyl-L-alanyl-D-glutamyl-meso-2,6-diaminopimeloyl-D-alanyl-D-alanine + UMP</text>
        <dbReference type="Rhea" id="RHEA:28386"/>
        <dbReference type="ChEBI" id="CHEBI:57865"/>
        <dbReference type="ChEBI" id="CHEBI:60392"/>
        <dbReference type="ChEBI" id="CHEBI:61386"/>
        <dbReference type="ChEBI" id="CHEBI:61387"/>
        <dbReference type="EC" id="2.7.8.13"/>
    </reaction>
</comment>
<comment type="cofactor">
    <cofactor evidence="1">
        <name>Mg(2+)</name>
        <dbReference type="ChEBI" id="CHEBI:18420"/>
    </cofactor>
</comment>
<comment type="pathway">
    <text evidence="1">Cell wall biogenesis; peptidoglycan biosynthesis.</text>
</comment>
<comment type="subcellular location">
    <subcellularLocation>
        <location evidence="1">Cell inner membrane</location>
        <topology evidence="1">Multi-pass membrane protein</topology>
    </subcellularLocation>
</comment>
<comment type="similarity">
    <text evidence="1">Belongs to the glycosyltransferase 4 family. MraY subfamily.</text>
</comment>